<protein>
    <recommendedName>
        <fullName evidence="1">2-dehydro-3-deoxyphosphooctonate aldolase</fullName>
        <ecNumber evidence="1">2.5.1.55</ecNumber>
    </recommendedName>
    <alternativeName>
        <fullName evidence="1">3-deoxy-D-manno-octulosonic acid 8-phosphate synthase</fullName>
    </alternativeName>
    <alternativeName>
        <fullName evidence="1">KDO-8-phosphate synthase</fullName>
        <shortName evidence="1">KDO 8-P synthase</shortName>
        <shortName evidence="1">KDOPS</shortName>
    </alternativeName>
    <alternativeName>
        <fullName evidence="1">Phospho-2-dehydro-3-deoxyoctonate aldolase</fullName>
    </alternativeName>
</protein>
<reference key="1">
    <citation type="journal article" date="2009" name="PLoS Genet.">
        <title>Organised genome dynamics in the Escherichia coli species results in highly diverse adaptive paths.</title>
        <authorList>
            <person name="Touchon M."/>
            <person name="Hoede C."/>
            <person name="Tenaillon O."/>
            <person name="Barbe V."/>
            <person name="Baeriswyl S."/>
            <person name="Bidet P."/>
            <person name="Bingen E."/>
            <person name="Bonacorsi S."/>
            <person name="Bouchier C."/>
            <person name="Bouvet O."/>
            <person name="Calteau A."/>
            <person name="Chiapello H."/>
            <person name="Clermont O."/>
            <person name="Cruveiller S."/>
            <person name="Danchin A."/>
            <person name="Diard M."/>
            <person name="Dossat C."/>
            <person name="Karoui M.E."/>
            <person name="Frapy E."/>
            <person name="Garry L."/>
            <person name="Ghigo J.M."/>
            <person name="Gilles A.M."/>
            <person name="Johnson J."/>
            <person name="Le Bouguenec C."/>
            <person name="Lescat M."/>
            <person name="Mangenot S."/>
            <person name="Martinez-Jehanne V."/>
            <person name="Matic I."/>
            <person name="Nassif X."/>
            <person name="Oztas S."/>
            <person name="Petit M.A."/>
            <person name="Pichon C."/>
            <person name="Rouy Z."/>
            <person name="Ruf C.S."/>
            <person name="Schneider D."/>
            <person name="Tourret J."/>
            <person name="Vacherie B."/>
            <person name="Vallenet D."/>
            <person name="Medigue C."/>
            <person name="Rocha E.P.C."/>
            <person name="Denamur E."/>
        </authorList>
    </citation>
    <scope>NUCLEOTIDE SEQUENCE [LARGE SCALE GENOMIC DNA]</scope>
    <source>
        <strain>ATCC 35469 / DSM 13698 / BCRC 15582 / CCUG 18766 / IAM 14443 / JCM 21226 / LMG 7866 / NBRC 102419 / NCTC 12128 / CDC 0568-73</strain>
    </source>
</reference>
<evidence type="ECO:0000255" key="1">
    <source>
        <dbReference type="HAMAP-Rule" id="MF_00056"/>
    </source>
</evidence>
<name>KDSA_ESCF3</name>
<keyword id="KW-0963">Cytoplasm</keyword>
<keyword id="KW-0448">Lipopolysaccharide biosynthesis</keyword>
<keyword id="KW-0808">Transferase</keyword>
<proteinExistence type="inferred from homology"/>
<gene>
    <name evidence="1" type="primary">kdsA</name>
    <name type="ordered locus">EFER_1746</name>
</gene>
<organism>
    <name type="scientific">Escherichia fergusonii (strain ATCC 35469 / DSM 13698 / CCUG 18766 / IAM 14443 / JCM 21226 / LMG 7866 / NBRC 102419 / NCTC 12128 / CDC 0568-73)</name>
    <dbReference type="NCBI Taxonomy" id="585054"/>
    <lineage>
        <taxon>Bacteria</taxon>
        <taxon>Pseudomonadati</taxon>
        <taxon>Pseudomonadota</taxon>
        <taxon>Gammaproteobacteria</taxon>
        <taxon>Enterobacterales</taxon>
        <taxon>Enterobacteriaceae</taxon>
        <taxon>Escherichia</taxon>
    </lineage>
</organism>
<comment type="catalytic activity">
    <reaction evidence="1">
        <text>D-arabinose 5-phosphate + phosphoenolpyruvate + H2O = 3-deoxy-alpha-D-manno-2-octulosonate-8-phosphate + phosphate</text>
        <dbReference type="Rhea" id="RHEA:14053"/>
        <dbReference type="ChEBI" id="CHEBI:15377"/>
        <dbReference type="ChEBI" id="CHEBI:43474"/>
        <dbReference type="ChEBI" id="CHEBI:57693"/>
        <dbReference type="ChEBI" id="CHEBI:58702"/>
        <dbReference type="ChEBI" id="CHEBI:85985"/>
        <dbReference type="EC" id="2.5.1.55"/>
    </reaction>
</comment>
<comment type="pathway">
    <text evidence="1">Carbohydrate biosynthesis; 3-deoxy-D-manno-octulosonate biosynthesis; 3-deoxy-D-manno-octulosonate from D-ribulose 5-phosphate: step 2/3.</text>
</comment>
<comment type="pathway">
    <text evidence="1">Bacterial outer membrane biogenesis; lipopolysaccharide biosynthesis.</text>
</comment>
<comment type="subcellular location">
    <subcellularLocation>
        <location evidence="1">Cytoplasm</location>
    </subcellularLocation>
</comment>
<comment type="similarity">
    <text evidence="1">Belongs to the KdsA family.</text>
</comment>
<dbReference type="EC" id="2.5.1.55" evidence="1"/>
<dbReference type="EMBL" id="CU928158">
    <property type="protein sequence ID" value="CAQ89261.1"/>
    <property type="molecule type" value="Genomic_DNA"/>
</dbReference>
<dbReference type="RefSeq" id="WP_000811059.1">
    <property type="nucleotide sequence ID" value="NC_011740.1"/>
</dbReference>
<dbReference type="SMR" id="B7LSH5"/>
<dbReference type="GeneID" id="75057216"/>
<dbReference type="KEGG" id="efe:EFER_1746"/>
<dbReference type="HOGENOM" id="CLU_036666_0_0_6"/>
<dbReference type="OrthoDB" id="9776934at2"/>
<dbReference type="UniPathway" id="UPA00030"/>
<dbReference type="UniPathway" id="UPA00357">
    <property type="reaction ID" value="UER00474"/>
</dbReference>
<dbReference type="Proteomes" id="UP000000745">
    <property type="component" value="Chromosome"/>
</dbReference>
<dbReference type="GO" id="GO:0005737">
    <property type="term" value="C:cytoplasm"/>
    <property type="evidence" value="ECO:0007669"/>
    <property type="project" value="UniProtKB-SubCell"/>
</dbReference>
<dbReference type="GO" id="GO:0008676">
    <property type="term" value="F:3-deoxy-8-phosphooctulonate synthase activity"/>
    <property type="evidence" value="ECO:0007669"/>
    <property type="project" value="UniProtKB-UniRule"/>
</dbReference>
<dbReference type="GO" id="GO:0019294">
    <property type="term" value="P:keto-3-deoxy-D-manno-octulosonic acid biosynthetic process"/>
    <property type="evidence" value="ECO:0007669"/>
    <property type="project" value="UniProtKB-UniRule"/>
</dbReference>
<dbReference type="FunFam" id="3.20.20.70:FF:000058">
    <property type="entry name" value="2-dehydro-3-deoxyphosphooctonate aldolase"/>
    <property type="match status" value="1"/>
</dbReference>
<dbReference type="Gene3D" id="3.20.20.70">
    <property type="entry name" value="Aldolase class I"/>
    <property type="match status" value="1"/>
</dbReference>
<dbReference type="HAMAP" id="MF_00056">
    <property type="entry name" value="KDO8P_synth"/>
    <property type="match status" value="1"/>
</dbReference>
<dbReference type="InterPro" id="IPR013785">
    <property type="entry name" value="Aldolase_TIM"/>
</dbReference>
<dbReference type="InterPro" id="IPR006218">
    <property type="entry name" value="DAHP1/KDSA"/>
</dbReference>
<dbReference type="InterPro" id="IPR006269">
    <property type="entry name" value="KDO8P_synthase"/>
</dbReference>
<dbReference type="NCBIfam" id="TIGR01362">
    <property type="entry name" value="KDO8P_synth"/>
    <property type="match status" value="1"/>
</dbReference>
<dbReference type="NCBIfam" id="NF003543">
    <property type="entry name" value="PRK05198.1"/>
    <property type="match status" value="1"/>
</dbReference>
<dbReference type="NCBIfam" id="NF009109">
    <property type="entry name" value="PRK12457.1"/>
    <property type="match status" value="1"/>
</dbReference>
<dbReference type="PANTHER" id="PTHR21057">
    <property type="entry name" value="PHOSPHO-2-DEHYDRO-3-DEOXYHEPTONATE ALDOLASE"/>
    <property type="match status" value="1"/>
</dbReference>
<dbReference type="Pfam" id="PF00793">
    <property type="entry name" value="DAHP_synth_1"/>
    <property type="match status" value="1"/>
</dbReference>
<dbReference type="SUPFAM" id="SSF51569">
    <property type="entry name" value="Aldolase"/>
    <property type="match status" value="1"/>
</dbReference>
<accession>B7LSH5</accession>
<sequence>MKQKVVSIGDINVANDLPFVLFGGMNVLESRDLAMRICEHYVTVTQKLGIPYVFKASFDKANRSSIHSYRGPGLEEGMKIFQELKQTFGVKIITDVHEPSQAQPVADVVDVIQLPAFLARQTDLVEAMAKTGAVINVKKPQFVSPGQMGNIVDKFKEGGNDKVILCDRGANFGYDNLVVDMLGFSVMKKVSGNSPVIFDVTHALQCRDPFGAASGGRRAQVTELARAGMAVGLAGLFIEAHPDPEHAKCDGPSALPLAKLEPFLKQMKAIDELVKGFEELDTSK</sequence>
<feature type="chain" id="PRO_1000116881" description="2-dehydro-3-deoxyphosphooctonate aldolase">
    <location>
        <begin position="1"/>
        <end position="284"/>
    </location>
</feature>